<evidence type="ECO:0000250" key="1">
    <source>
        <dbReference type="UniProtKB" id="O08997"/>
    </source>
</evidence>
<evidence type="ECO:0000255" key="2">
    <source>
        <dbReference type="PROSITE-ProRule" id="PRU00280"/>
    </source>
</evidence>
<evidence type="ECO:0000269" key="3">
    <source>
    </source>
</evidence>
<evidence type="ECO:0000269" key="4">
    <source>
    </source>
</evidence>
<evidence type="ECO:0000269" key="5">
    <source>
    </source>
</evidence>
<evidence type="ECO:0000269" key="6">
    <source>
    </source>
</evidence>
<evidence type="ECO:0000269" key="7">
    <source>
    </source>
</evidence>
<evidence type="ECO:0000269" key="8">
    <source>
    </source>
</evidence>
<evidence type="ECO:0000305" key="9"/>
<evidence type="ECO:0000312" key="10">
    <source>
        <dbReference type="HGNC" id="HGNC:798"/>
    </source>
</evidence>
<evidence type="ECO:0007744" key="11">
    <source>
        <dbReference type="PDB" id="5T7L"/>
    </source>
</evidence>
<evidence type="ECO:0007744" key="12">
    <source>
    </source>
</evidence>
<evidence type="ECO:0007829" key="13">
    <source>
        <dbReference type="PDB" id="1FE0"/>
    </source>
</evidence>
<evidence type="ECO:0007829" key="14">
    <source>
        <dbReference type="PDB" id="3IWL"/>
    </source>
</evidence>
<dbReference type="EMBL" id="U70660">
    <property type="protein sequence ID" value="AAC51227.1"/>
    <property type="molecule type" value="mRNA"/>
</dbReference>
<dbReference type="EMBL" id="AY165037">
    <property type="protein sequence ID" value="AAN84554.1"/>
    <property type="molecule type" value="Genomic_DNA"/>
</dbReference>
<dbReference type="EMBL" id="BT009786">
    <property type="protein sequence ID" value="AAP88788.1"/>
    <property type="molecule type" value="mRNA"/>
</dbReference>
<dbReference type="EMBL" id="AK293063">
    <property type="protein sequence ID" value="BAF85752.1"/>
    <property type="molecule type" value="mRNA"/>
</dbReference>
<dbReference type="EMBL" id="AY986502">
    <property type="protein sequence ID" value="AAX81411.1"/>
    <property type="molecule type" value="Genomic_DNA"/>
</dbReference>
<dbReference type="EMBL" id="CH471062">
    <property type="protein sequence ID" value="EAW61663.1"/>
    <property type="molecule type" value="Genomic_DNA"/>
</dbReference>
<dbReference type="EMBL" id="CH471062">
    <property type="protein sequence ID" value="EAW61664.1"/>
    <property type="molecule type" value="Genomic_DNA"/>
</dbReference>
<dbReference type="EMBL" id="BC112248">
    <property type="protein sequence ID" value="AAI12249.1"/>
    <property type="molecule type" value="mRNA"/>
</dbReference>
<dbReference type="EMBL" id="BC112250">
    <property type="protein sequence ID" value="AAI12251.1"/>
    <property type="molecule type" value="mRNA"/>
</dbReference>
<dbReference type="CCDS" id="CCDS47317.1"/>
<dbReference type="RefSeq" id="NP_004036.1">
    <property type="nucleotide sequence ID" value="NM_004045.4"/>
</dbReference>
<dbReference type="PDB" id="1FE0">
    <property type="method" value="X-ray"/>
    <property type="resolution" value="1.75 A"/>
    <property type="chains" value="A/B=1-68"/>
</dbReference>
<dbReference type="PDB" id="1FE4">
    <property type="method" value="X-ray"/>
    <property type="resolution" value="1.75 A"/>
    <property type="chains" value="A/B=1-68"/>
</dbReference>
<dbReference type="PDB" id="1FEE">
    <property type="method" value="X-ray"/>
    <property type="resolution" value="1.80 A"/>
    <property type="chains" value="A/B=1-68"/>
</dbReference>
<dbReference type="PDB" id="1TL4">
    <property type="method" value="NMR"/>
    <property type="chains" value="A=1-68"/>
</dbReference>
<dbReference type="PDB" id="1TL5">
    <property type="method" value="NMR"/>
    <property type="chains" value="A=1-68"/>
</dbReference>
<dbReference type="PDB" id="2K1R">
    <property type="method" value="NMR"/>
    <property type="chains" value="B=1-68"/>
</dbReference>
<dbReference type="PDB" id="2LQ9">
    <property type="method" value="NMR"/>
    <property type="chains" value="A=1-68"/>
</dbReference>
<dbReference type="PDB" id="3CJK">
    <property type="method" value="X-ray"/>
    <property type="resolution" value="1.80 A"/>
    <property type="chains" value="A=2-68"/>
</dbReference>
<dbReference type="PDB" id="3IWL">
    <property type="method" value="X-ray"/>
    <property type="resolution" value="1.60 A"/>
    <property type="chains" value="A=1-68"/>
</dbReference>
<dbReference type="PDB" id="3IWX">
    <property type="method" value="X-ray"/>
    <property type="resolution" value="2.14 A"/>
    <property type="chains" value="A/B=1-68"/>
</dbReference>
<dbReference type="PDB" id="4QOT">
    <property type="method" value="X-ray"/>
    <property type="resolution" value="2.20 A"/>
    <property type="chains" value="A/B=1-68"/>
</dbReference>
<dbReference type="PDB" id="4YDX">
    <property type="method" value="X-ray"/>
    <property type="resolution" value="1.60 A"/>
    <property type="chains" value="A=2-68"/>
</dbReference>
<dbReference type="PDB" id="4YEA">
    <property type="method" value="X-ray"/>
    <property type="resolution" value="2.14 A"/>
    <property type="chains" value="A/B=2-68"/>
</dbReference>
<dbReference type="PDB" id="5F0W">
    <property type="method" value="X-ray"/>
    <property type="resolution" value="2.70 A"/>
    <property type="chains" value="A/B/C/D=1-68"/>
</dbReference>
<dbReference type="PDB" id="5T7L">
    <property type="method" value="X-ray"/>
    <property type="resolution" value="2.83 A"/>
    <property type="chains" value="A=2-68"/>
</dbReference>
<dbReference type="PDB" id="7DC1">
    <property type="method" value="X-ray"/>
    <property type="resolution" value="1.75 A"/>
    <property type="chains" value="A/B=1-68"/>
</dbReference>
<dbReference type="PDB" id="7ZC3">
    <property type="method" value="X-ray"/>
    <property type="resolution" value="1.90 A"/>
    <property type="chains" value="A/B=1-68"/>
</dbReference>
<dbReference type="PDBsum" id="1FE0"/>
<dbReference type="PDBsum" id="1FE4"/>
<dbReference type="PDBsum" id="1FEE"/>
<dbReference type="PDBsum" id="1TL4"/>
<dbReference type="PDBsum" id="1TL5"/>
<dbReference type="PDBsum" id="2K1R"/>
<dbReference type="PDBsum" id="2LQ9"/>
<dbReference type="PDBsum" id="3CJK"/>
<dbReference type="PDBsum" id="3IWL"/>
<dbReference type="PDBsum" id="3IWX"/>
<dbReference type="PDBsum" id="4QOT"/>
<dbReference type="PDBsum" id="4YDX"/>
<dbReference type="PDBsum" id="4YEA"/>
<dbReference type="PDBsum" id="5F0W"/>
<dbReference type="PDBsum" id="5T7L"/>
<dbReference type="PDBsum" id="7DC1"/>
<dbReference type="PDBsum" id="7ZC3"/>
<dbReference type="BMRB" id="O00244"/>
<dbReference type="SMR" id="O00244"/>
<dbReference type="BioGRID" id="106965">
    <property type="interactions" value="31"/>
</dbReference>
<dbReference type="FunCoup" id="O00244">
    <property type="interactions" value="1101"/>
</dbReference>
<dbReference type="IntAct" id="O00244">
    <property type="interactions" value="10"/>
</dbReference>
<dbReference type="STRING" id="9606.ENSP00000430598"/>
<dbReference type="DrugBank" id="DB03127">
    <property type="generic name" value="Benzamidine"/>
</dbReference>
<dbReference type="DrugBank" id="DB00515">
    <property type="generic name" value="Cisplatin"/>
</dbReference>
<dbReference type="DrugBank" id="DB09130">
    <property type="generic name" value="Copper"/>
</dbReference>
<dbReference type="DrugBank" id="DB02772">
    <property type="generic name" value="Sucrose"/>
</dbReference>
<dbReference type="TCDB" id="9.B.462.1.5">
    <property type="family name" value="the atx1 copper ion chaparone or transport protein (atx1) family"/>
</dbReference>
<dbReference type="GlyGen" id="O00244">
    <property type="glycosylation" value="1 site, 1 O-linked glycan (1 site)"/>
</dbReference>
<dbReference type="iPTMnet" id="O00244"/>
<dbReference type="PhosphoSitePlus" id="O00244"/>
<dbReference type="BioMuta" id="ATOX1"/>
<dbReference type="jPOST" id="O00244"/>
<dbReference type="MassIVE" id="O00244"/>
<dbReference type="PaxDb" id="9606-ENSP00000430598"/>
<dbReference type="PeptideAtlas" id="O00244"/>
<dbReference type="ProteomicsDB" id="47805"/>
<dbReference type="Pumba" id="O00244"/>
<dbReference type="TopDownProteomics" id="O00244"/>
<dbReference type="Antibodypedia" id="28244">
    <property type="antibodies" value="231 antibodies from 24 providers"/>
</dbReference>
<dbReference type="DNASU" id="475"/>
<dbReference type="Ensembl" id="ENST00000313115.11">
    <property type="protein sequence ID" value="ENSP00000316854.6"/>
    <property type="gene ID" value="ENSG00000177556.12"/>
</dbReference>
<dbReference type="Ensembl" id="ENST00000522710.1">
    <property type="protein sequence ID" value="ENSP00000429814.1"/>
    <property type="gene ID" value="ENSG00000177556.12"/>
</dbReference>
<dbReference type="Ensembl" id="ENST00000524142.5">
    <property type="protein sequence ID" value="ENSP00000430598.1"/>
    <property type="gene ID" value="ENSG00000177556.12"/>
</dbReference>
<dbReference type="GeneID" id="475"/>
<dbReference type="KEGG" id="hsa:475"/>
<dbReference type="MANE-Select" id="ENST00000313115.11">
    <property type="protein sequence ID" value="ENSP00000316854.6"/>
    <property type="RefSeq nucleotide sequence ID" value="NM_004045.4"/>
    <property type="RefSeq protein sequence ID" value="NP_004036.1"/>
</dbReference>
<dbReference type="UCSC" id="uc003luk.4">
    <property type="organism name" value="human"/>
</dbReference>
<dbReference type="AGR" id="HGNC:798"/>
<dbReference type="CTD" id="475"/>
<dbReference type="DisGeNET" id="475"/>
<dbReference type="GeneCards" id="ATOX1"/>
<dbReference type="HGNC" id="HGNC:798">
    <property type="gene designation" value="ATOX1"/>
</dbReference>
<dbReference type="HPA" id="ENSG00000177556">
    <property type="expression patterns" value="Low tissue specificity"/>
</dbReference>
<dbReference type="MIM" id="602270">
    <property type="type" value="gene"/>
</dbReference>
<dbReference type="neXtProt" id="NX_O00244"/>
<dbReference type="OpenTargets" id="ENSG00000177556"/>
<dbReference type="PharmGKB" id="PA25096"/>
<dbReference type="VEuPathDB" id="HostDB:ENSG00000177556"/>
<dbReference type="eggNOG" id="KOG1603">
    <property type="taxonomic scope" value="Eukaryota"/>
</dbReference>
<dbReference type="GeneTree" id="ENSGT00940000162517"/>
<dbReference type="InParanoid" id="O00244"/>
<dbReference type="OMA" id="MTHTYKF"/>
<dbReference type="OrthoDB" id="689350at2759"/>
<dbReference type="PAN-GO" id="O00244">
    <property type="GO annotations" value="3 GO annotations based on evolutionary models"/>
</dbReference>
<dbReference type="PhylomeDB" id="O00244"/>
<dbReference type="TreeFam" id="TF352589"/>
<dbReference type="PathwayCommons" id="O00244"/>
<dbReference type="Reactome" id="R-HSA-3299685">
    <property type="pathway name" value="Detoxification of Reactive Oxygen Species"/>
</dbReference>
<dbReference type="Reactome" id="R-HSA-6803544">
    <property type="pathway name" value="Ion influx/efflux at host-pathogen interface"/>
</dbReference>
<dbReference type="SignaLink" id="O00244"/>
<dbReference type="BioGRID-ORCS" id="475">
    <property type="hits" value="21 hits in 1159 CRISPR screens"/>
</dbReference>
<dbReference type="ChiTaRS" id="ATOX1">
    <property type="organism name" value="human"/>
</dbReference>
<dbReference type="EvolutionaryTrace" id="O00244"/>
<dbReference type="GeneWiki" id="ATOX1"/>
<dbReference type="GenomeRNAi" id="475"/>
<dbReference type="Pharos" id="O00244">
    <property type="development level" value="Tbio"/>
</dbReference>
<dbReference type="PRO" id="PR:O00244"/>
<dbReference type="Proteomes" id="UP000005640">
    <property type="component" value="Chromosome 5"/>
</dbReference>
<dbReference type="RNAct" id="O00244">
    <property type="molecule type" value="protein"/>
</dbReference>
<dbReference type="Bgee" id="ENSG00000177556">
    <property type="expression patterns" value="Expressed in C1 segment of cervical spinal cord and 204 other cell types or tissues"/>
</dbReference>
<dbReference type="ExpressionAtlas" id="O00244">
    <property type="expression patterns" value="baseline and differential"/>
</dbReference>
<dbReference type="GO" id="GO:0005829">
    <property type="term" value="C:cytosol"/>
    <property type="evidence" value="ECO:0000318"/>
    <property type="project" value="GO_Central"/>
</dbReference>
<dbReference type="GO" id="GO:0051117">
    <property type="term" value="F:ATPase binding"/>
    <property type="evidence" value="ECO:0007669"/>
    <property type="project" value="Ensembl"/>
</dbReference>
<dbReference type="GO" id="GO:0016531">
    <property type="term" value="F:copper chaperone activity"/>
    <property type="evidence" value="ECO:0000314"/>
    <property type="project" value="UniProtKB"/>
</dbReference>
<dbReference type="GO" id="GO:0005507">
    <property type="term" value="F:copper ion binding"/>
    <property type="evidence" value="ECO:0000314"/>
    <property type="project" value="UniProtKB"/>
</dbReference>
<dbReference type="GO" id="GO:0032767">
    <property type="term" value="F:copper-dependent protein binding"/>
    <property type="evidence" value="ECO:0000314"/>
    <property type="project" value="UniProtKB"/>
</dbReference>
<dbReference type="GO" id="GO:1903136">
    <property type="term" value="F:cuprous ion binding"/>
    <property type="evidence" value="ECO:0000314"/>
    <property type="project" value="UniProtKB"/>
</dbReference>
<dbReference type="GO" id="GO:0016530">
    <property type="term" value="F:metallochaperone activity"/>
    <property type="evidence" value="ECO:0000304"/>
    <property type="project" value="UniProtKB"/>
</dbReference>
<dbReference type="GO" id="GO:0060003">
    <property type="term" value="P:copper ion export"/>
    <property type="evidence" value="ECO:0007669"/>
    <property type="project" value="Ensembl"/>
</dbReference>
<dbReference type="GO" id="GO:0006825">
    <property type="term" value="P:copper ion transport"/>
    <property type="evidence" value="ECO:0000318"/>
    <property type="project" value="GO_Central"/>
</dbReference>
<dbReference type="GO" id="GO:0006878">
    <property type="term" value="P:intracellular copper ion homeostasis"/>
    <property type="evidence" value="ECO:0000304"/>
    <property type="project" value="ProtInc"/>
</dbReference>
<dbReference type="GO" id="GO:0043066">
    <property type="term" value="P:negative regulation of apoptotic process"/>
    <property type="evidence" value="ECO:0007669"/>
    <property type="project" value="Ensembl"/>
</dbReference>
<dbReference type="GO" id="GO:0006979">
    <property type="term" value="P:response to oxidative stress"/>
    <property type="evidence" value="ECO:0000304"/>
    <property type="project" value="ProtInc"/>
</dbReference>
<dbReference type="CDD" id="cd00371">
    <property type="entry name" value="HMA"/>
    <property type="match status" value="1"/>
</dbReference>
<dbReference type="FunFam" id="3.30.70.100:FF:000008">
    <property type="entry name" value="Copper transport protein ATOX1"/>
    <property type="match status" value="1"/>
</dbReference>
<dbReference type="Gene3D" id="3.30.70.100">
    <property type="match status" value="1"/>
</dbReference>
<dbReference type="InterPro" id="IPR051881">
    <property type="entry name" value="Copper_transport_ATOX1-like"/>
</dbReference>
<dbReference type="InterPro" id="IPR017969">
    <property type="entry name" value="Heavy-metal-associated_CS"/>
</dbReference>
<dbReference type="InterPro" id="IPR006121">
    <property type="entry name" value="HMA_dom"/>
</dbReference>
<dbReference type="InterPro" id="IPR036163">
    <property type="entry name" value="HMA_dom_sf"/>
</dbReference>
<dbReference type="PANTHER" id="PTHR46365">
    <property type="entry name" value="COPPER TRANSPORT PROTEIN ATOX1"/>
    <property type="match status" value="1"/>
</dbReference>
<dbReference type="PANTHER" id="PTHR46365:SF1">
    <property type="entry name" value="COPPER TRANSPORT PROTEIN ATOX1"/>
    <property type="match status" value="1"/>
</dbReference>
<dbReference type="Pfam" id="PF00403">
    <property type="entry name" value="HMA"/>
    <property type="match status" value="1"/>
</dbReference>
<dbReference type="SUPFAM" id="SSF55008">
    <property type="entry name" value="HMA, heavy metal-associated domain"/>
    <property type="match status" value="1"/>
</dbReference>
<dbReference type="PROSITE" id="PS01047">
    <property type="entry name" value="HMA_1"/>
    <property type="match status" value="1"/>
</dbReference>
<dbReference type="PROSITE" id="PS50846">
    <property type="entry name" value="HMA_2"/>
    <property type="match status" value="1"/>
</dbReference>
<keyword id="KW-0002">3D-structure</keyword>
<keyword id="KW-0007">Acetylation</keyword>
<keyword id="KW-0143">Chaperone</keyword>
<keyword id="KW-0186">Copper</keyword>
<keyword id="KW-0187">Copper transport</keyword>
<keyword id="KW-0406">Ion transport</keyword>
<keyword id="KW-0479">Metal-binding</keyword>
<keyword id="KW-0597">Phosphoprotein</keyword>
<keyword id="KW-1267">Proteomics identification</keyword>
<keyword id="KW-1185">Reference proteome</keyword>
<keyword id="KW-0813">Transport</keyword>
<proteinExistence type="evidence at protein level"/>
<protein>
    <recommendedName>
        <fullName evidence="9">Copper transport protein ATOX1</fullName>
    </recommendedName>
    <alternativeName>
        <fullName>Metal transport protein ATX1</fullName>
    </alternativeName>
</protein>
<name>ATOX1_HUMAN</name>
<organism>
    <name type="scientific">Homo sapiens</name>
    <name type="common">Human</name>
    <dbReference type="NCBI Taxonomy" id="9606"/>
    <lineage>
        <taxon>Eukaryota</taxon>
        <taxon>Metazoa</taxon>
        <taxon>Chordata</taxon>
        <taxon>Craniata</taxon>
        <taxon>Vertebrata</taxon>
        <taxon>Euteleostomi</taxon>
        <taxon>Mammalia</taxon>
        <taxon>Eutheria</taxon>
        <taxon>Euarchontoglires</taxon>
        <taxon>Primates</taxon>
        <taxon>Haplorrhini</taxon>
        <taxon>Catarrhini</taxon>
        <taxon>Hominidae</taxon>
        <taxon>Homo</taxon>
    </lineage>
</organism>
<reference key="1">
    <citation type="journal article" date="1997" name="J. Biol. Chem.">
        <title>Identification and functional expression of HAH1, a novel human gene involved in copper homeostasis.</title>
        <authorList>
            <person name="Klomp L.W.J."/>
            <person name="Lin S.-J."/>
            <person name="Yuan D.S."/>
            <person name="Klausner R.D."/>
            <person name="Culotta V.C."/>
            <person name="Gitlin J.D."/>
        </authorList>
    </citation>
    <scope>NUCLEOTIDE SEQUENCE [MRNA]</scope>
    <source>
        <tissue>Liver</tissue>
    </source>
</reference>
<reference key="2">
    <citation type="journal article" date="2003" name="BMC Genet.">
        <title>Genomic organization of ATOX1, a human copper chaperone.</title>
        <authorList>
            <person name="Liu P.-C."/>
            <person name="Koeller D.M."/>
            <person name="Kaler S.G."/>
        </authorList>
    </citation>
    <scope>NUCLEOTIDE SEQUENCE [GENOMIC DNA]</scope>
</reference>
<reference key="3">
    <citation type="submission" date="2003-08" db="EMBL/GenBank/DDBJ databases">
        <title>Cloning of human full-length CDSs in BD Creator(TM) system donor vector.</title>
        <authorList>
            <person name="Kalnine N."/>
            <person name="Chen X."/>
            <person name="Rolfs A."/>
            <person name="Halleck A."/>
            <person name="Hines L."/>
            <person name="Eisenstein S."/>
            <person name="Koundinya M."/>
            <person name="Raphael J."/>
            <person name="Moreira D."/>
            <person name="Kelley T."/>
            <person name="LaBaer J."/>
            <person name="Lin Y."/>
            <person name="Phelan M."/>
            <person name="Farmer A."/>
        </authorList>
    </citation>
    <scope>NUCLEOTIDE SEQUENCE [LARGE SCALE MRNA]</scope>
</reference>
<reference key="4">
    <citation type="journal article" date="2004" name="Nat. Genet.">
        <title>Complete sequencing and characterization of 21,243 full-length human cDNAs.</title>
        <authorList>
            <person name="Ota T."/>
            <person name="Suzuki Y."/>
            <person name="Nishikawa T."/>
            <person name="Otsuki T."/>
            <person name="Sugiyama T."/>
            <person name="Irie R."/>
            <person name="Wakamatsu A."/>
            <person name="Hayashi K."/>
            <person name="Sato H."/>
            <person name="Nagai K."/>
            <person name="Kimura K."/>
            <person name="Makita H."/>
            <person name="Sekine M."/>
            <person name="Obayashi M."/>
            <person name="Nishi T."/>
            <person name="Shibahara T."/>
            <person name="Tanaka T."/>
            <person name="Ishii S."/>
            <person name="Yamamoto J."/>
            <person name="Saito K."/>
            <person name="Kawai Y."/>
            <person name="Isono Y."/>
            <person name="Nakamura Y."/>
            <person name="Nagahari K."/>
            <person name="Murakami K."/>
            <person name="Yasuda T."/>
            <person name="Iwayanagi T."/>
            <person name="Wagatsuma M."/>
            <person name="Shiratori A."/>
            <person name="Sudo H."/>
            <person name="Hosoiri T."/>
            <person name="Kaku Y."/>
            <person name="Kodaira H."/>
            <person name="Kondo H."/>
            <person name="Sugawara M."/>
            <person name="Takahashi M."/>
            <person name="Kanda K."/>
            <person name="Yokoi T."/>
            <person name="Furuya T."/>
            <person name="Kikkawa E."/>
            <person name="Omura Y."/>
            <person name="Abe K."/>
            <person name="Kamihara K."/>
            <person name="Katsuta N."/>
            <person name="Sato K."/>
            <person name="Tanikawa M."/>
            <person name="Yamazaki M."/>
            <person name="Ninomiya K."/>
            <person name="Ishibashi T."/>
            <person name="Yamashita H."/>
            <person name="Murakawa K."/>
            <person name="Fujimori K."/>
            <person name="Tanai H."/>
            <person name="Kimata M."/>
            <person name="Watanabe M."/>
            <person name="Hiraoka S."/>
            <person name="Chiba Y."/>
            <person name="Ishida S."/>
            <person name="Ono Y."/>
            <person name="Takiguchi S."/>
            <person name="Watanabe S."/>
            <person name="Yosida M."/>
            <person name="Hotuta T."/>
            <person name="Kusano J."/>
            <person name="Kanehori K."/>
            <person name="Takahashi-Fujii A."/>
            <person name="Hara H."/>
            <person name="Tanase T.-O."/>
            <person name="Nomura Y."/>
            <person name="Togiya S."/>
            <person name="Komai F."/>
            <person name="Hara R."/>
            <person name="Takeuchi K."/>
            <person name="Arita M."/>
            <person name="Imose N."/>
            <person name="Musashino K."/>
            <person name="Yuuki H."/>
            <person name="Oshima A."/>
            <person name="Sasaki N."/>
            <person name="Aotsuka S."/>
            <person name="Yoshikawa Y."/>
            <person name="Matsunawa H."/>
            <person name="Ichihara T."/>
            <person name="Shiohata N."/>
            <person name="Sano S."/>
            <person name="Moriya S."/>
            <person name="Momiyama H."/>
            <person name="Satoh N."/>
            <person name="Takami S."/>
            <person name="Terashima Y."/>
            <person name="Suzuki O."/>
            <person name="Nakagawa S."/>
            <person name="Senoh A."/>
            <person name="Mizoguchi H."/>
            <person name="Goto Y."/>
            <person name="Shimizu F."/>
            <person name="Wakebe H."/>
            <person name="Hishigaki H."/>
            <person name="Watanabe T."/>
            <person name="Sugiyama A."/>
            <person name="Takemoto M."/>
            <person name="Kawakami B."/>
            <person name="Yamazaki M."/>
            <person name="Watanabe K."/>
            <person name="Kumagai A."/>
            <person name="Itakura S."/>
            <person name="Fukuzumi Y."/>
            <person name="Fujimori Y."/>
            <person name="Komiyama M."/>
            <person name="Tashiro H."/>
            <person name="Tanigami A."/>
            <person name="Fujiwara T."/>
            <person name="Ono T."/>
            <person name="Yamada K."/>
            <person name="Fujii Y."/>
            <person name="Ozaki K."/>
            <person name="Hirao M."/>
            <person name="Ohmori Y."/>
            <person name="Kawabata A."/>
            <person name="Hikiji T."/>
            <person name="Kobatake N."/>
            <person name="Inagaki H."/>
            <person name="Ikema Y."/>
            <person name="Okamoto S."/>
            <person name="Okitani R."/>
            <person name="Kawakami T."/>
            <person name="Noguchi S."/>
            <person name="Itoh T."/>
            <person name="Shigeta K."/>
            <person name="Senba T."/>
            <person name="Matsumura K."/>
            <person name="Nakajima Y."/>
            <person name="Mizuno T."/>
            <person name="Morinaga M."/>
            <person name="Sasaki M."/>
            <person name="Togashi T."/>
            <person name="Oyama M."/>
            <person name="Hata H."/>
            <person name="Watanabe M."/>
            <person name="Komatsu T."/>
            <person name="Mizushima-Sugano J."/>
            <person name="Satoh T."/>
            <person name="Shirai Y."/>
            <person name="Takahashi Y."/>
            <person name="Nakagawa K."/>
            <person name="Okumura K."/>
            <person name="Nagase T."/>
            <person name="Nomura N."/>
            <person name="Kikuchi H."/>
            <person name="Masuho Y."/>
            <person name="Yamashita R."/>
            <person name="Nakai K."/>
            <person name="Yada T."/>
            <person name="Nakamura Y."/>
            <person name="Ohara O."/>
            <person name="Isogai T."/>
            <person name="Sugano S."/>
        </authorList>
    </citation>
    <scope>NUCLEOTIDE SEQUENCE [LARGE SCALE MRNA]</scope>
    <source>
        <tissue>Uterus</tissue>
    </source>
</reference>
<reference key="5">
    <citation type="submission" date="2005-03" db="EMBL/GenBank/DDBJ databases">
        <authorList>
            <consortium name="NIEHS SNPs program"/>
        </authorList>
    </citation>
    <scope>NUCLEOTIDE SEQUENCE [GENOMIC DNA]</scope>
</reference>
<reference key="6">
    <citation type="submission" date="2005-09" db="EMBL/GenBank/DDBJ databases">
        <authorList>
            <person name="Mural R.J."/>
            <person name="Istrail S."/>
            <person name="Sutton G.G."/>
            <person name="Florea L."/>
            <person name="Halpern A.L."/>
            <person name="Mobarry C.M."/>
            <person name="Lippert R."/>
            <person name="Walenz B."/>
            <person name="Shatkay H."/>
            <person name="Dew I."/>
            <person name="Miller J.R."/>
            <person name="Flanigan M.J."/>
            <person name="Edwards N.J."/>
            <person name="Bolanos R."/>
            <person name="Fasulo D."/>
            <person name="Halldorsson B.V."/>
            <person name="Hannenhalli S."/>
            <person name="Turner R."/>
            <person name="Yooseph S."/>
            <person name="Lu F."/>
            <person name="Nusskern D.R."/>
            <person name="Shue B.C."/>
            <person name="Zheng X.H."/>
            <person name="Zhong F."/>
            <person name="Delcher A.L."/>
            <person name="Huson D.H."/>
            <person name="Kravitz S.A."/>
            <person name="Mouchard L."/>
            <person name="Reinert K."/>
            <person name="Remington K.A."/>
            <person name="Clark A.G."/>
            <person name="Waterman M.S."/>
            <person name="Eichler E.E."/>
            <person name="Adams M.D."/>
            <person name="Hunkapiller M.W."/>
            <person name="Myers E.W."/>
            <person name="Venter J.C."/>
        </authorList>
    </citation>
    <scope>NUCLEOTIDE SEQUENCE [LARGE SCALE GENOMIC DNA]</scope>
</reference>
<reference key="7">
    <citation type="journal article" date="2004" name="Genome Res.">
        <title>The status, quality, and expansion of the NIH full-length cDNA project: the Mammalian Gene Collection (MGC).</title>
        <authorList>
            <consortium name="The MGC Project Team"/>
        </authorList>
    </citation>
    <scope>NUCLEOTIDE SEQUENCE [LARGE SCALE MRNA]</scope>
</reference>
<reference key="8">
    <citation type="journal article" date="2009" name="Science">
        <title>Lysine acetylation targets protein complexes and co-regulates major cellular functions.</title>
        <authorList>
            <person name="Choudhary C."/>
            <person name="Kumar C."/>
            <person name="Gnad F."/>
            <person name="Nielsen M.L."/>
            <person name="Rehman M."/>
            <person name="Walther T.C."/>
            <person name="Olsen J.V."/>
            <person name="Mann M."/>
        </authorList>
    </citation>
    <scope>IDENTIFICATION BY MASS SPECTROMETRY [LARGE SCALE ANALYSIS]</scope>
</reference>
<reference key="9">
    <citation type="journal article" date="2011" name="BMC Syst. Biol.">
        <title>Initial characterization of the human central proteome.</title>
        <authorList>
            <person name="Burkard T.R."/>
            <person name="Planyavsky M."/>
            <person name="Kaupe I."/>
            <person name="Breitwieser F.P."/>
            <person name="Buerckstuemmer T."/>
            <person name="Bennett K.L."/>
            <person name="Superti-Furga G."/>
            <person name="Colinge J."/>
        </authorList>
    </citation>
    <scope>IDENTIFICATION BY MASS SPECTROMETRY [LARGE SCALE ANALYSIS]</scope>
</reference>
<reference key="10">
    <citation type="journal article" date="2012" name="Cell. Mol. Life Sci.">
        <title>The copper-transporting capacity of ATP7A mutants associated with Menkes disease is ameliorated by COMMD1 as a result of improved protein expression.</title>
        <authorList>
            <person name="Vonk W.I."/>
            <person name="de Bie P."/>
            <person name="Wichers C.G."/>
            <person name="van den Berghe P.V."/>
            <person name="van der Plaats R."/>
            <person name="Berger R."/>
            <person name="Wijmenga C."/>
            <person name="Klomp L.W."/>
            <person name="van de Sluis B."/>
        </authorList>
    </citation>
    <scope>INTERACTION WITH ATP7A</scope>
</reference>
<reference key="11">
    <citation type="journal article" date="2013" name="J. Proteome Res.">
        <title>Toward a comprehensive characterization of a human cancer cell phosphoproteome.</title>
        <authorList>
            <person name="Zhou H."/>
            <person name="Di Palma S."/>
            <person name="Preisinger C."/>
            <person name="Peng M."/>
            <person name="Polat A.N."/>
            <person name="Heck A.J."/>
            <person name="Mohammed S."/>
        </authorList>
    </citation>
    <scope>PHOSPHORYLATION [LARGE SCALE ANALYSIS] AT SER-47</scope>
    <scope>IDENTIFICATION BY MASS SPECTROMETRY [LARGE SCALE ANALYSIS]</scope>
    <source>
        <tissue>Erythroleukemia</tissue>
    </source>
</reference>
<reference key="12">
    <citation type="journal article" date="2014" name="J. Phys. Chem. B">
        <title>Probing the structural flexibility of the human copper metallochaperone Atox1 dimer and its interaction with the CTR1 c-terminal domain.</title>
        <authorList>
            <person name="Levy A.R."/>
            <person name="Yarmiayev V."/>
            <person name="Moskovitz Y."/>
            <person name="Ruthstein S."/>
        </authorList>
    </citation>
    <scope>INTERACTION WITH SLC31A1</scope>
    <scope>SUBUNIT</scope>
</reference>
<reference key="13">
    <citation type="journal article" date="2014" name="J. Proteomics">
        <title>An enzyme assisted RP-RPLC approach for in-depth analysis of human liver phosphoproteome.</title>
        <authorList>
            <person name="Bian Y."/>
            <person name="Song C."/>
            <person name="Cheng K."/>
            <person name="Dong M."/>
            <person name="Wang F."/>
            <person name="Huang J."/>
            <person name="Sun D."/>
            <person name="Wang L."/>
            <person name="Ye M."/>
            <person name="Zou H."/>
        </authorList>
    </citation>
    <scope>IDENTIFICATION BY MASS SPECTROMETRY [LARGE SCALE ANALYSIS]</scope>
    <source>
        <tissue>Liver</tissue>
    </source>
</reference>
<reference key="14">
    <citation type="journal article" date="2016" name="Biophys. J.">
        <title>The C-Terminus of Human Copper Importer Ctr1 Acts as a Binding Site and Transfers Copper to Atox1.</title>
        <authorList>
            <person name="Kahra D."/>
            <person name="Kovermann M."/>
            <person name="Wittung-Stafshede P."/>
        </authorList>
    </citation>
    <scope>INTERACTION WITH SLC31A1</scope>
</reference>
<reference key="15">
    <citation type="journal article" date="2000" name="Nat. Struct. Biol.">
        <title>Structural basis for copper transfer by the metallochaperone for the Menkes/Wilson disease proteins.</title>
        <authorList>
            <person name="Wernimont A.K."/>
            <person name="Huffman D.L."/>
            <person name="Lamb A.L."/>
            <person name="O'Halloran T.V."/>
            <person name="Rosenzweig A.C."/>
        </authorList>
    </citation>
    <scope>X-RAY CRYSTALLOGRAPHY (1.75 ANGSTROMS)</scope>
    <scope>COPPER-BINDING SITES</scope>
    <scope>INTERACTION WITH ATP7B</scope>
</reference>
<reference key="16">
    <citation type="journal article" date="2009" name="Biochem. J.">
        <title>Copper(I)-mediated protein-protein interactions result from suboptimal interaction surfaces.</title>
        <authorList>
            <person name="Banci L."/>
            <person name="Bertini I."/>
            <person name="Calderone V."/>
            <person name="Della-Malva N."/>
            <person name="Felli I.C."/>
            <person name="Neri S."/>
            <person name="Pavelkova A."/>
            <person name="Rosato A."/>
        </authorList>
    </citation>
    <scope>X-RAY CRYSTALLOGRAPHY (1.80 ANGSTROMS) OF 2-68</scope>
    <scope>INTERACTION WITH ATP7A</scope>
    <scope>DOMAIN</scope>
    <scope>MUTAGENESIS OF ARG-21; VAL-22 AND THR-58</scope>
</reference>
<reference key="17">
    <citation type="journal article" date="2019" name="J. Am. Chem. Soc.">
        <title>Mechanistic and Structural Basis for Inhibition of Copper Trafficking by Platinum Anticancer Drugs.</title>
        <authorList>
            <person name="Lasorsa A."/>
            <person name="Nardella M.I."/>
            <person name="Rosato A."/>
            <person name="Mirabelli V."/>
            <person name="Caliandro R."/>
            <person name="Caliandro R."/>
            <person name="Natile G."/>
            <person name="Arnesano F."/>
        </authorList>
    </citation>
    <scope>X-RAY CRYSTALLOGRAPHY (2.83 ANGSTROMS) OF 2-68 IN COMPLEX WITH COPPER</scope>
    <scope>MUTAGENESIS OF CYS-15</scope>
    <scope>DOMAIN</scope>
</reference>
<feature type="chain" id="PRO_0000212537" description="Copper transport protein ATOX1">
    <location>
        <begin position="1"/>
        <end position="68"/>
    </location>
</feature>
<feature type="domain" description="HMA" evidence="2">
    <location>
        <begin position="1"/>
        <end position="63"/>
    </location>
</feature>
<feature type="binding site" evidence="2 8 11">
    <location>
        <position position="12"/>
    </location>
    <ligand>
        <name>Cu cation</name>
        <dbReference type="ChEBI" id="CHEBI:23378"/>
    </ligand>
</feature>
<feature type="binding site" evidence="2 8 11">
    <location>
        <position position="15"/>
    </location>
    <ligand>
        <name>Cu cation</name>
        <dbReference type="ChEBI" id="CHEBI:23378"/>
    </ligand>
</feature>
<feature type="modified residue" description="Phosphoserine" evidence="12">
    <location>
        <position position="47"/>
    </location>
</feature>
<feature type="modified residue" description="N6-acetyllysine" evidence="1">
    <location>
        <position position="60"/>
    </location>
</feature>
<feature type="mutagenesis site" description="Impairs Cu(+)-bridged heterodimer formation with ATP7A." evidence="8">
    <original>C</original>
    <variation>A</variation>
    <location>
        <position position="15"/>
    </location>
</feature>
<feature type="mutagenesis site" description="Has no overall effect on Cu(+)-bridged heterodimer formation with ATP7A." evidence="4">
    <original>R</original>
    <variation>E</variation>
    <location>
        <position position="21"/>
    </location>
</feature>
<feature type="mutagenesis site" description="Has no overall effect on Cu(+)-bridged heterodimer formation with ATP7A." evidence="4">
    <original>V</original>
    <variation>A</variation>
    <location>
        <position position="22"/>
    </location>
</feature>
<feature type="mutagenesis site" description="Has no overall effect on Cu(+)-bridged heterodimer formation with ATP7A." evidence="4">
    <original>T</original>
    <variation>A</variation>
    <location>
        <position position="58"/>
    </location>
</feature>
<feature type="strand" evidence="14">
    <location>
        <begin position="3"/>
        <end position="8"/>
    </location>
</feature>
<feature type="helix" evidence="14">
    <location>
        <begin position="13"/>
        <end position="26"/>
    </location>
</feature>
<feature type="strand" evidence="14">
    <location>
        <begin position="28"/>
        <end position="34"/>
    </location>
</feature>
<feature type="turn" evidence="14">
    <location>
        <begin position="35"/>
        <end position="38"/>
    </location>
</feature>
<feature type="strand" evidence="14">
    <location>
        <begin position="39"/>
        <end position="46"/>
    </location>
</feature>
<feature type="helix" evidence="14">
    <location>
        <begin position="48"/>
        <end position="56"/>
    </location>
</feature>
<feature type="turn" evidence="13">
    <location>
        <begin position="57"/>
        <end position="59"/>
    </location>
</feature>
<feature type="strand" evidence="14">
    <location>
        <begin position="62"/>
        <end position="66"/>
    </location>
</feature>
<sequence length="68" mass="7402">MPKHEFSVDMTCGGCAEAVSRVLNKLGGVKYDIDLPNKKVCIESEHSMDTLLATLKKTGKTVSYLGLE</sequence>
<accession>O00244</accession>
<accession>A8KAJ8</accession>
<accession>D3DQI2</accession>
<accession>Q2M1R6</accession>
<accession>Q56AP3</accession>
<gene>
    <name evidence="10" type="primary">ATOX1</name>
    <name type="synonym">HAH1</name>
</gene>
<comment type="function">
    <text>Binds and deliver cytosolic copper to the copper ATPase proteins. May be important in cellular antioxidant defense.</text>
</comment>
<comment type="subunit">
    <text evidence="3 4 5 6 7">Homodimer (PubMed:24837030). Interacts with ATP7B (PubMed:10966647). Interacts with ATP7A (PubMed:19453293, PubMed:21667063). Interacts (via dimer form) with SLC31A1 (via C-terminal domain); this interaction improves ATOX1 stability and controls intracellular Cu(I) levels (PubMed:24837030, PubMed:26745413).</text>
</comment>
<comment type="interaction">
    <interactant intactId="EBI-10179267">
        <id>O00244</id>
    </interactant>
    <interactant intactId="EBI-11668501">
        <id>P35670</id>
        <label>ATP7B</label>
    </interactant>
    <organismsDiffer>false</organismsDiffer>
    <experiments>3</experiments>
</comment>
<comment type="interaction">
    <interactant intactId="EBI-10179267">
        <id>O00244</id>
    </interactant>
    <interactant intactId="EBI-2835332">
        <id>O43822</id>
        <label>CFAP410</label>
    </interactant>
    <organismsDiffer>false</organismsDiffer>
    <experiments>3</experiments>
</comment>
<comment type="interaction">
    <interactant intactId="EBI-10179267">
        <id>O00244</id>
    </interactant>
    <interactant intactId="EBI-2531022">
        <id>P49747</id>
        <label>COMP</label>
    </interactant>
    <organismsDiffer>false</organismsDiffer>
    <experiments>3</experiments>
</comment>
<comment type="interaction">
    <interactant intactId="EBI-10179267">
        <id>O00244</id>
    </interactant>
    <interactant intactId="EBI-8638992">
        <id>Q9NWS6</id>
        <label>FAM118A</label>
    </interactant>
    <organismsDiffer>false</organismsDiffer>
    <experiments>6</experiments>
</comment>
<comment type="interaction">
    <interactant intactId="EBI-10179267">
        <id>O00244</id>
    </interactant>
    <interactant intactId="EBI-10179283">
        <id>O95749</id>
        <label>GGPS1</label>
    </interactant>
    <organismsDiffer>false</organismsDiffer>
    <experiments>3</experiments>
</comment>
<comment type="interaction">
    <interactant intactId="EBI-10179267">
        <id>O00244</id>
    </interactant>
    <interactant intactId="EBI-11956853">
        <id>Q8N987</id>
        <label>NECAB1</label>
    </interactant>
    <organismsDiffer>false</organismsDiffer>
    <experiments>3</experiments>
</comment>
<comment type="tissue specificity">
    <text>Ubiquitous.</text>
</comment>
<comment type="domain">
    <text evidence="4 8">The heavy-metal-associated domain (HMA) coordinates a Cu(+) ion via the cysteine residues within the CXXC motif. The transfer of Cu(+) ion from ATOX1 to ATP7A involves the formation of a three-coordinate Cu(+)-bridged heterodimer where the metal is shared between the two metal binding sites of ATOX1 and ATP7A. The Cu(+) ion appears to switch between two coordination modes, forming two links with one protein and one with the other. Cisplatin, a chemotherapeutic drug, can bind the CXXC motif and hinder the release of Cu(+) ion.</text>
</comment>
<comment type="similarity">
    <text evidence="9">Belongs to the ATX1 family.</text>
</comment>